<sequence length="370" mass="43946">MNKMNRKFSKLLKNPHIFFRDFLNKKYPIKNTELPFAESEEANLIEAHQKLDKIIQKNTLRQSDIDVVFTWVDGSDPLWQSKYHQYAPNYQANSALYATDIARFEDHNELYYSVHAVLKFMPWVRHIFIVTDNQKPKWLDEAYQEKITLISHQDIIDKEYLPTFNSHVIEAFLHKIPNLSENFIYFNDDVFIARELQAEHFFQANGIASIFMSEKSLTQMRDRGTITPTLSASEYSIRLLNKYYNTNIDSPLVHTYIPLKKSMYELAWQRYEKEILGFLPNKLRTNHDLNFANFLIPWLMYFEGKAMPKIDICYYFNIRSPNALTQYKKLLNKKNIGEQPNSFCANDFNSQKSINNYQNQLFSFLNSYYS</sequence>
<name>CPS1A_ACTSU</name>
<feature type="chain" id="PRO_0000235942" description="Capsular polysaccharide phosphotransferase">
    <location>
        <begin position="1"/>
        <end position="370"/>
    </location>
</feature>
<organism>
    <name type="scientific">Actinobacillus suis</name>
    <dbReference type="NCBI Taxonomy" id="716"/>
    <lineage>
        <taxon>Bacteria</taxon>
        <taxon>Pseudomonadati</taxon>
        <taxon>Pseudomonadota</taxon>
        <taxon>Gammaproteobacteria</taxon>
        <taxon>Pasteurellales</taxon>
        <taxon>Pasteurellaceae</taxon>
        <taxon>Actinobacillus</taxon>
    </lineage>
</organism>
<dbReference type="EC" id="2.7.-.-"/>
<dbReference type="EMBL" id="AY253301">
    <property type="protein sequence ID" value="AAO65491.1"/>
    <property type="molecule type" value="Genomic_DNA"/>
</dbReference>
<dbReference type="RefSeq" id="WP_039195563.1">
    <property type="nucleotide sequence ID" value="NZ_LT906456.1"/>
</dbReference>
<dbReference type="SMR" id="Q84CH1"/>
<dbReference type="GeneID" id="34291998"/>
<dbReference type="GO" id="GO:0016772">
    <property type="term" value="F:transferase activity, transferring phosphorus-containing groups"/>
    <property type="evidence" value="ECO:0007669"/>
    <property type="project" value="InterPro"/>
</dbReference>
<dbReference type="GO" id="GO:0000271">
    <property type="term" value="P:polysaccharide biosynthetic process"/>
    <property type="evidence" value="ECO:0007669"/>
    <property type="project" value="UniProtKB-KW"/>
</dbReference>
<dbReference type="InterPro" id="IPR047141">
    <property type="entry name" value="Stealth"/>
</dbReference>
<dbReference type="InterPro" id="IPR031358">
    <property type="entry name" value="Stealth_CR1"/>
</dbReference>
<dbReference type="InterPro" id="IPR021520">
    <property type="entry name" value="Stealth_CR2"/>
</dbReference>
<dbReference type="PANTHER" id="PTHR24045">
    <property type="match status" value="1"/>
</dbReference>
<dbReference type="PANTHER" id="PTHR24045:SF0">
    <property type="entry name" value="N-ACETYLGLUCOSAMINE-1-PHOSPHOTRANSFERASE SUBUNITS ALPHA_BETA"/>
    <property type="match status" value="1"/>
</dbReference>
<dbReference type="Pfam" id="PF17101">
    <property type="entry name" value="Stealth_CR1"/>
    <property type="match status" value="1"/>
</dbReference>
<dbReference type="Pfam" id="PF11380">
    <property type="entry name" value="Stealth_CR2"/>
    <property type="match status" value="1"/>
</dbReference>
<comment type="function">
    <text>Part of a capsular polysaccharide synthesis locus.</text>
</comment>
<comment type="miscellaneous">
    <text>Stealth proteins are part of a protein family that is conserved from bacteria to higher eukaryotes. Family members were first identified in microbes as proteins that help pathogens to elude the host innate immune system. Microbial stealth proteins are involved in the biosynthesis of exopolysaccharides. Stealth proteins are predicted to function as hexose-1-phosphoryltransferases.</text>
</comment>
<comment type="similarity">
    <text evidence="1">Belongs to the stealth family.</text>
</comment>
<reference key="1">
    <citation type="submission" date="2003-03" db="EMBL/GenBank/DDBJ databases">
        <title>Capsular gene cluster of Actinobacillus suis K1.</title>
        <authorList>
            <person name="Slavic D."/>
            <person name="MacInnes J.I."/>
        </authorList>
    </citation>
    <scope>NUCLEOTIDE SEQUENCE [GENOMIC DNA]</scope>
    <source>
        <strain>SO4 / Serotype K1</strain>
    </source>
</reference>
<reference key="2">
    <citation type="journal article" date="2005" name="PLoS Comput. Biol.">
        <title>Stealth proteins: in silico identification of a novel protein family rendering bacterial pathogens invisible to host immune defense.</title>
        <authorList>
            <person name="Sperisen P."/>
            <person name="Schmid C.D."/>
            <person name="Bucher P."/>
            <person name="Zilian O."/>
        </authorList>
    </citation>
    <scope>IDENTIFICATION AS A STEALTH PROTEIN</scope>
    <scope>PREDICTION OF FUNCTION</scope>
</reference>
<evidence type="ECO:0000305" key="1"/>
<proteinExistence type="inferred from homology"/>
<protein>
    <recommendedName>
        <fullName>Capsular polysaccharide phosphotransferase</fullName>
        <ecNumber>2.7.-.-</ecNumber>
    </recommendedName>
    <alternativeName>
        <fullName>Stealth protein</fullName>
    </alternativeName>
</protein>
<accession>Q84CH1</accession>
<keyword id="KW-0270">Exopolysaccharide synthesis</keyword>
<keyword id="KW-0808">Transferase</keyword>